<gene>
    <name evidence="1" type="primary">rhaM</name>
    <name type="ordered locus">SeHA_C4372</name>
</gene>
<accession>B4TBX8</accession>
<evidence type="ECO:0000255" key="1">
    <source>
        <dbReference type="HAMAP-Rule" id="MF_01663"/>
    </source>
</evidence>
<proteinExistence type="inferred from homology"/>
<dbReference type="EC" id="5.1.3.32" evidence="1"/>
<dbReference type="EMBL" id="CP001120">
    <property type="protein sequence ID" value="ACF69788.1"/>
    <property type="molecule type" value="Genomic_DNA"/>
</dbReference>
<dbReference type="RefSeq" id="WP_000619477.1">
    <property type="nucleotide sequence ID" value="NC_011083.1"/>
</dbReference>
<dbReference type="SMR" id="B4TBX8"/>
<dbReference type="KEGG" id="seh:SeHA_C4372"/>
<dbReference type="HOGENOM" id="CLU_100689_2_0_6"/>
<dbReference type="UniPathway" id="UPA00125"/>
<dbReference type="Proteomes" id="UP000001866">
    <property type="component" value="Chromosome"/>
</dbReference>
<dbReference type="GO" id="GO:0005737">
    <property type="term" value="C:cytoplasm"/>
    <property type="evidence" value="ECO:0007669"/>
    <property type="project" value="UniProtKB-SubCell"/>
</dbReference>
<dbReference type="GO" id="GO:0062192">
    <property type="term" value="F:L-rhamnose mutarotase activity"/>
    <property type="evidence" value="ECO:0007669"/>
    <property type="project" value="UniProtKB-EC"/>
</dbReference>
<dbReference type="GO" id="GO:0019301">
    <property type="term" value="P:rhamnose catabolic process"/>
    <property type="evidence" value="ECO:0007669"/>
    <property type="project" value="TreeGrafter"/>
</dbReference>
<dbReference type="Gene3D" id="3.30.70.100">
    <property type="match status" value="1"/>
</dbReference>
<dbReference type="HAMAP" id="MF_01663">
    <property type="entry name" value="L_rham_rotase"/>
    <property type="match status" value="1"/>
</dbReference>
<dbReference type="InterPro" id="IPR011008">
    <property type="entry name" value="Dimeric_a/b-barrel"/>
</dbReference>
<dbReference type="InterPro" id="IPR013448">
    <property type="entry name" value="L-rhamnose_mutarotase"/>
</dbReference>
<dbReference type="InterPro" id="IPR008000">
    <property type="entry name" value="Rham/fucose_mutarotase"/>
</dbReference>
<dbReference type="NCBIfam" id="TIGR02625">
    <property type="entry name" value="YiiL_rotase"/>
    <property type="match status" value="1"/>
</dbReference>
<dbReference type="PANTHER" id="PTHR34389">
    <property type="entry name" value="L-RHAMNOSE MUTAROTASE"/>
    <property type="match status" value="1"/>
</dbReference>
<dbReference type="PANTHER" id="PTHR34389:SF2">
    <property type="entry name" value="L-RHAMNOSE MUTAROTASE"/>
    <property type="match status" value="1"/>
</dbReference>
<dbReference type="Pfam" id="PF05336">
    <property type="entry name" value="rhaM"/>
    <property type="match status" value="1"/>
</dbReference>
<dbReference type="SUPFAM" id="SSF54909">
    <property type="entry name" value="Dimeric alpha+beta barrel"/>
    <property type="match status" value="1"/>
</dbReference>
<protein>
    <recommendedName>
        <fullName evidence="1">L-rhamnose mutarotase</fullName>
        <ecNumber evidence="1">5.1.3.32</ecNumber>
    </recommendedName>
    <alternativeName>
        <fullName evidence="1">Rhamnose 1-epimerase</fullName>
    </alternativeName>
    <alternativeName>
        <fullName evidence="1">Type-3 mutarotase</fullName>
    </alternativeName>
</protein>
<name>RHAM_SALHS</name>
<keyword id="KW-0119">Carbohydrate metabolism</keyword>
<keyword id="KW-0963">Cytoplasm</keyword>
<keyword id="KW-0413">Isomerase</keyword>
<keyword id="KW-0684">Rhamnose metabolism</keyword>
<comment type="function">
    <text evidence="1">Involved in the anomeric conversion of L-rhamnose.</text>
</comment>
<comment type="catalytic activity">
    <reaction evidence="1">
        <text>alpha-L-rhamnose = beta-L-rhamnose</text>
        <dbReference type="Rhea" id="RHEA:25584"/>
        <dbReference type="ChEBI" id="CHEBI:27586"/>
        <dbReference type="ChEBI" id="CHEBI:27907"/>
        <dbReference type="EC" id="5.1.3.32"/>
    </reaction>
</comment>
<comment type="pathway">
    <text evidence="1">Carbohydrate metabolism; L-rhamnose metabolism.</text>
</comment>
<comment type="subunit">
    <text evidence="1">Homodimer.</text>
</comment>
<comment type="subcellular location">
    <subcellularLocation>
        <location evidence="1">Cytoplasm</location>
    </subcellularLocation>
</comment>
<comment type="similarity">
    <text evidence="1">Belongs to the rhamnose mutarotase family.</text>
</comment>
<sequence length="104" mass="12361">MIRKAFVMQVNADAHEEYQRRHNPIWPELEAVLKSHGAHHYAIYLDQERNLLFATVEIESEERWNAVASTDVCQRWWKHMRDVMPANPDNSPVNAELKEVFYLQ</sequence>
<feature type="chain" id="PRO_1000187229" description="L-rhamnose mutarotase">
    <location>
        <begin position="1"/>
        <end position="104"/>
    </location>
</feature>
<feature type="active site" description="Proton donor" evidence="1">
    <location>
        <position position="22"/>
    </location>
</feature>
<feature type="binding site" evidence="1">
    <location>
        <position position="18"/>
    </location>
    <ligand>
        <name>substrate</name>
    </ligand>
</feature>
<feature type="binding site" evidence="1">
    <location>
        <position position="41"/>
    </location>
    <ligand>
        <name>substrate</name>
    </ligand>
</feature>
<feature type="binding site" evidence="1">
    <location>
        <begin position="76"/>
        <end position="77"/>
    </location>
    <ligand>
        <name>substrate</name>
    </ligand>
</feature>
<reference key="1">
    <citation type="journal article" date="2011" name="J. Bacteriol.">
        <title>Comparative genomics of 28 Salmonella enterica isolates: evidence for CRISPR-mediated adaptive sublineage evolution.</title>
        <authorList>
            <person name="Fricke W.F."/>
            <person name="Mammel M.K."/>
            <person name="McDermott P.F."/>
            <person name="Tartera C."/>
            <person name="White D.G."/>
            <person name="Leclerc J.E."/>
            <person name="Ravel J."/>
            <person name="Cebula T.A."/>
        </authorList>
    </citation>
    <scope>NUCLEOTIDE SEQUENCE [LARGE SCALE GENOMIC DNA]</scope>
    <source>
        <strain>SL476</strain>
    </source>
</reference>
<organism>
    <name type="scientific">Salmonella heidelberg (strain SL476)</name>
    <dbReference type="NCBI Taxonomy" id="454169"/>
    <lineage>
        <taxon>Bacteria</taxon>
        <taxon>Pseudomonadati</taxon>
        <taxon>Pseudomonadota</taxon>
        <taxon>Gammaproteobacteria</taxon>
        <taxon>Enterobacterales</taxon>
        <taxon>Enterobacteriaceae</taxon>
        <taxon>Salmonella</taxon>
    </lineage>
</organism>